<dbReference type="EC" id="4.3.3.6" evidence="1"/>
<dbReference type="EC" id="3.5.1.2" evidence="1"/>
<dbReference type="EMBL" id="CP001177">
    <property type="protein sequence ID" value="ACJ82368.1"/>
    <property type="molecule type" value="Genomic_DNA"/>
</dbReference>
<dbReference type="SMR" id="B7HPS7"/>
<dbReference type="MEROPS" id="C26.A32"/>
<dbReference type="KEGG" id="bcr:BCAH187_A0017"/>
<dbReference type="HOGENOM" id="CLU_069674_2_0_9"/>
<dbReference type="UniPathway" id="UPA00245"/>
<dbReference type="Proteomes" id="UP000002214">
    <property type="component" value="Chromosome"/>
</dbReference>
<dbReference type="GO" id="GO:0005829">
    <property type="term" value="C:cytosol"/>
    <property type="evidence" value="ECO:0007669"/>
    <property type="project" value="TreeGrafter"/>
</dbReference>
<dbReference type="GO" id="GO:1903600">
    <property type="term" value="C:glutaminase complex"/>
    <property type="evidence" value="ECO:0007669"/>
    <property type="project" value="TreeGrafter"/>
</dbReference>
<dbReference type="GO" id="GO:0004359">
    <property type="term" value="F:glutaminase activity"/>
    <property type="evidence" value="ECO:0007669"/>
    <property type="project" value="UniProtKB-UniRule"/>
</dbReference>
<dbReference type="GO" id="GO:0036381">
    <property type="term" value="F:pyridoxal 5'-phosphate synthase (glutamine hydrolysing) activity"/>
    <property type="evidence" value="ECO:0007669"/>
    <property type="project" value="UniProtKB-UniRule"/>
</dbReference>
<dbReference type="GO" id="GO:0006543">
    <property type="term" value="P:glutamine catabolic process"/>
    <property type="evidence" value="ECO:0007669"/>
    <property type="project" value="UniProtKB-UniRule"/>
</dbReference>
<dbReference type="GO" id="GO:0042823">
    <property type="term" value="P:pyridoxal phosphate biosynthetic process"/>
    <property type="evidence" value="ECO:0007669"/>
    <property type="project" value="UniProtKB-UniRule"/>
</dbReference>
<dbReference type="GO" id="GO:0008614">
    <property type="term" value="P:pyridoxine metabolic process"/>
    <property type="evidence" value="ECO:0007669"/>
    <property type="project" value="TreeGrafter"/>
</dbReference>
<dbReference type="CDD" id="cd01749">
    <property type="entry name" value="GATase1_PB"/>
    <property type="match status" value="1"/>
</dbReference>
<dbReference type="FunFam" id="3.40.50.880:FF:000010">
    <property type="entry name" value="uncharacterized protein LOC100176842 isoform X2"/>
    <property type="match status" value="1"/>
</dbReference>
<dbReference type="Gene3D" id="3.40.50.880">
    <property type="match status" value="1"/>
</dbReference>
<dbReference type="HAMAP" id="MF_01615">
    <property type="entry name" value="PdxT"/>
    <property type="match status" value="1"/>
</dbReference>
<dbReference type="InterPro" id="IPR029062">
    <property type="entry name" value="Class_I_gatase-like"/>
</dbReference>
<dbReference type="InterPro" id="IPR002161">
    <property type="entry name" value="PdxT/SNO"/>
</dbReference>
<dbReference type="InterPro" id="IPR021196">
    <property type="entry name" value="PdxT/SNO_CS"/>
</dbReference>
<dbReference type="NCBIfam" id="TIGR03800">
    <property type="entry name" value="PLP_synth_Pdx2"/>
    <property type="match status" value="1"/>
</dbReference>
<dbReference type="PANTHER" id="PTHR31559">
    <property type="entry name" value="PYRIDOXAL 5'-PHOSPHATE SYNTHASE SUBUNIT SNO"/>
    <property type="match status" value="1"/>
</dbReference>
<dbReference type="PANTHER" id="PTHR31559:SF0">
    <property type="entry name" value="PYRIDOXAL 5'-PHOSPHATE SYNTHASE SUBUNIT SNO1-RELATED"/>
    <property type="match status" value="1"/>
</dbReference>
<dbReference type="Pfam" id="PF01174">
    <property type="entry name" value="SNO"/>
    <property type="match status" value="1"/>
</dbReference>
<dbReference type="PIRSF" id="PIRSF005639">
    <property type="entry name" value="Glut_amidoT_SNO"/>
    <property type="match status" value="1"/>
</dbReference>
<dbReference type="SUPFAM" id="SSF52317">
    <property type="entry name" value="Class I glutamine amidotransferase-like"/>
    <property type="match status" value="1"/>
</dbReference>
<dbReference type="PROSITE" id="PS01236">
    <property type="entry name" value="PDXT_SNO_1"/>
    <property type="match status" value="1"/>
</dbReference>
<dbReference type="PROSITE" id="PS51130">
    <property type="entry name" value="PDXT_SNO_2"/>
    <property type="match status" value="1"/>
</dbReference>
<sequence>MVKIGVLGLQGAVREHVKSVEASGAEAVVVKRIEQLEEIDGLILPGGESTTMRRLIDKYAFMEPLRTFAKSGKPMFGTCAGMILLAKTLIGYDEAHIGAMDITVERNAFGRQKDSFEAALSIKGVGEDFVGVFIRAPYVVNVADNVEVLSTHGDRMVAVRQGPFLAASFHPELTDDHRVTAYFVEMVKEAKMKKVV</sequence>
<organism>
    <name type="scientific">Bacillus cereus (strain AH187)</name>
    <dbReference type="NCBI Taxonomy" id="405534"/>
    <lineage>
        <taxon>Bacteria</taxon>
        <taxon>Bacillati</taxon>
        <taxon>Bacillota</taxon>
        <taxon>Bacilli</taxon>
        <taxon>Bacillales</taxon>
        <taxon>Bacillaceae</taxon>
        <taxon>Bacillus</taxon>
        <taxon>Bacillus cereus group</taxon>
    </lineage>
</organism>
<feature type="chain" id="PRO_1000185876" description="Pyridoxal 5'-phosphate synthase subunit PdxT">
    <location>
        <begin position="1"/>
        <end position="196"/>
    </location>
</feature>
<feature type="active site" description="Nucleophile" evidence="1">
    <location>
        <position position="79"/>
    </location>
</feature>
<feature type="active site" description="Charge relay system" evidence="1">
    <location>
        <position position="170"/>
    </location>
</feature>
<feature type="active site" description="Charge relay system" evidence="1">
    <location>
        <position position="172"/>
    </location>
</feature>
<feature type="binding site" evidence="1">
    <location>
        <begin position="47"/>
        <end position="49"/>
    </location>
    <ligand>
        <name>L-glutamine</name>
        <dbReference type="ChEBI" id="CHEBI:58359"/>
    </ligand>
</feature>
<feature type="binding site" evidence="1">
    <location>
        <position position="106"/>
    </location>
    <ligand>
        <name>L-glutamine</name>
        <dbReference type="ChEBI" id="CHEBI:58359"/>
    </ligand>
</feature>
<feature type="binding site" evidence="1">
    <location>
        <begin position="134"/>
        <end position="135"/>
    </location>
    <ligand>
        <name>L-glutamine</name>
        <dbReference type="ChEBI" id="CHEBI:58359"/>
    </ligand>
</feature>
<keyword id="KW-0315">Glutamine amidotransferase</keyword>
<keyword id="KW-0378">Hydrolase</keyword>
<keyword id="KW-0456">Lyase</keyword>
<keyword id="KW-0663">Pyridoxal phosphate</keyword>
<gene>
    <name evidence="1" type="primary">pdxT</name>
    <name type="ordered locus">BCAH187_A0017</name>
</gene>
<comment type="function">
    <text evidence="1">Catalyzes the hydrolysis of glutamine to glutamate and ammonia as part of the biosynthesis of pyridoxal 5'-phosphate. The resulting ammonia molecule is channeled to the active site of PdxS.</text>
</comment>
<comment type="catalytic activity">
    <reaction evidence="1">
        <text>aldehydo-D-ribose 5-phosphate + D-glyceraldehyde 3-phosphate + L-glutamine = pyridoxal 5'-phosphate + L-glutamate + phosphate + 3 H2O + H(+)</text>
        <dbReference type="Rhea" id="RHEA:31507"/>
        <dbReference type="ChEBI" id="CHEBI:15377"/>
        <dbReference type="ChEBI" id="CHEBI:15378"/>
        <dbReference type="ChEBI" id="CHEBI:29985"/>
        <dbReference type="ChEBI" id="CHEBI:43474"/>
        <dbReference type="ChEBI" id="CHEBI:58273"/>
        <dbReference type="ChEBI" id="CHEBI:58359"/>
        <dbReference type="ChEBI" id="CHEBI:59776"/>
        <dbReference type="ChEBI" id="CHEBI:597326"/>
        <dbReference type="EC" id="4.3.3.6"/>
    </reaction>
</comment>
<comment type="catalytic activity">
    <reaction evidence="1">
        <text>L-glutamine + H2O = L-glutamate + NH4(+)</text>
        <dbReference type="Rhea" id="RHEA:15889"/>
        <dbReference type="ChEBI" id="CHEBI:15377"/>
        <dbReference type="ChEBI" id="CHEBI:28938"/>
        <dbReference type="ChEBI" id="CHEBI:29985"/>
        <dbReference type="ChEBI" id="CHEBI:58359"/>
        <dbReference type="EC" id="3.5.1.2"/>
    </reaction>
</comment>
<comment type="pathway">
    <text evidence="1">Cofactor biosynthesis; pyridoxal 5'-phosphate biosynthesis.</text>
</comment>
<comment type="subunit">
    <text evidence="1">In the presence of PdxS, forms a dodecamer of heterodimers. Only shows activity in the heterodimer.</text>
</comment>
<comment type="similarity">
    <text evidence="1">Belongs to the glutaminase PdxT/SNO family.</text>
</comment>
<reference key="1">
    <citation type="submission" date="2008-10" db="EMBL/GenBank/DDBJ databases">
        <title>Genome sequence of Bacillus cereus AH187.</title>
        <authorList>
            <person name="Dodson R.J."/>
            <person name="Durkin A.S."/>
            <person name="Rosovitz M.J."/>
            <person name="Rasko D.A."/>
            <person name="Kolsto A.B."/>
            <person name="Okstad O.A."/>
            <person name="Ravel J."/>
            <person name="Sutton G."/>
        </authorList>
    </citation>
    <scope>NUCLEOTIDE SEQUENCE [LARGE SCALE GENOMIC DNA]</scope>
    <source>
        <strain>AH187</strain>
    </source>
</reference>
<accession>B7HPS7</accession>
<name>PDXT_BACC7</name>
<evidence type="ECO:0000255" key="1">
    <source>
        <dbReference type="HAMAP-Rule" id="MF_01615"/>
    </source>
</evidence>
<protein>
    <recommendedName>
        <fullName evidence="1">Pyridoxal 5'-phosphate synthase subunit PdxT</fullName>
        <ecNumber evidence="1">4.3.3.6</ecNumber>
    </recommendedName>
    <alternativeName>
        <fullName evidence="1">Pdx2</fullName>
    </alternativeName>
    <alternativeName>
        <fullName evidence="1">Pyridoxal 5'-phosphate synthase glutaminase subunit</fullName>
        <ecNumber evidence="1">3.5.1.2</ecNumber>
    </alternativeName>
</protein>
<proteinExistence type="inferred from homology"/>